<comment type="function">
    <text evidence="1">Specifically methylates guanosine-37 in various tRNAs.</text>
</comment>
<comment type="catalytic activity">
    <reaction evidence="1">
        <text>guanosine(37) in tRNA + S-adenosyl-L-methionine = N(1)-methylguanosine(37) in tRNA + S-adenosyl-L-homocysteine + H(+)</text>
        <dbReference type="Rhea" id="RHEA:36899"/>
        <dbReference type="Rhea" id="RHEA-COMP:10145"/>
        <dbReference type="Rhea" id="RHEA-COMP:10147"/>
        <dbReference type="ChEBI" id="CHEBI:15378"/>
        <dbReference type="ChEBI" id="CHEBI:57856"/>
        <dbReference type="ChEBI" id="CHEBI:59789"/>
        <dbReference type="ChEBI" id="CHEBI:73542"/>
        <dbReference type="ChEBI" id="CHEBI:74269"/>
        <dbReference type="EC" id="2.1.1.228"/>
    </reaction>
</comment>
<comment type="subunit">
    <text evidence="1">Homodimer.</text>
</comment>
<comment type="subcellular location">
    <subcellularLocation>
        <location evidence="1">Cytoplasm</location>
    </subcellularLocation>
</comment>
<comment type="similarity">
    <text evidence="1">Belongs to the RNA methyltransferase TrmD family.</text>
</comment>
<sequence length="239" mass="26131">MSLRAVVLTLFPEMFPGPLGHSIAGKALETGAWSIEAVDIRSFATDRHHTVDDSPFGGGAGMVMRPDVVDAAIAASWPGDGPLVYLTPRGRVLDQALVRELAQAPSLTLLCGRYEGVDQRVLDERGMLEISIGDYVLSGGEAAAQVLLDAVVRLLPGVVGKTESLEDESFERGLLEYPHYTRPAEWRGRTVPEVLTSGHHQKVSDWRQARSEEITQTRRPDLWARYVAARTSLDRGCGQ</sequence>
<reference key="1">
    <citation type="journal article" date="2011" name="Stand. Genomic Sci.">
        <title>Complete genome sequence of Rhodospirillum rubrum type strain (S1).</title>
        <authorList>
            <person name="Munk A.C."/>
            <person name="Copeland A."/>
            <person name="Lucas S."/>
            <person name="Lapidus A."/>
            <person name="Del Rio T.G."/>
            <person name="Barry K."/>
            <person name="Detter J.C."/>
            <person name="Hammon N."/>
            <person name="Israni S."/>
            <person name="Pitluck S."/>
            <person name="Brettin T."/>
            <person name="Bruce D."/>
            <person name="Han C."/>
            <person name="Tapia R."/>
            <person name="Gilna P."/>
            <person name="Schmutz J."/>
            <person name="Larimer F."/>
            <person name="Land M."/>
            <person name="Kyrpides N.C."/>
            <person name="Mavromatis K."/>
            <person name="Richardson P."/>
            <person name="Rohde M."/>
            <person name="Goeker M."/>
            <person name="Klenk H.P."/>
            <person name="Zhang Y."/>
            <person name="Roberts G.P."/>
            <person name="Reslewic S."/>
            <person name="Schwartz D.C."/>
        </authorList>
    </citation>
    <scope>NUCLEOTIDE SEQUENCE [LARGE SCALE GENOMIC DNA]</scope>
    <source>
        <strain>ATCC 11170 / ATH 1.1.1 / DSM 467 / LMG 4362 / NCIMB 8255 / S1</strain>
    </source>
</reference>
<dbReference type="EC" id="2.1.1.228" evidence="1"/>
<dbReference type="EMBL" id="CP000230">
    <property type="protein sequence ID" value="ABC21988.1"/>
    <property type="molecule type" value="Genomic_DNA"/>
</dbReference>
<dbReference type="RefSeq" id="WP_011388942.1">
    <property type="nucleotide sequence ID" value="NC_007643.1"/>
</dbReference>
<dbReference type="RefSeq" id="YP_426275.1">
    <property type="nucleotide sequence ID" value="NC_007643.1"/>
</dbReference>
<dbReference type="SMR" id="Q2RV57"/>
<dbReference type="STRING" id="269796.Rru_A1187"/>
<dbReference type="EnsemblBacteria" id="ABC21988">
    <property type="protein sequence ID" value="ABC21988"/>
    <property type="gene ID" value="Rru_A1187"/>
</dbReference>
<dbReference type="KEGG" id="rru:Rru_A1187"/>
<dbReference type="PATRIC" id="fig|269796.9.peg.1251"/>
<dbReference type="eggNOG" id="COG0336">
    <property type="taxonomic scope" value="Bacteria"/>
</dbReference>
<dbReference type="HOGENOM" id="CLU_047363_0_1_5"/>
<dbReference type="PhylomeDB" id="Q2RV57"/>
<dbReference type="Proteomes" id="UP000001929">
    <property type="component" value="Chromosome"/>
</dbReference>
<dbReference type="GO" id="GO:0005829">
    <property type="term" value="C:cytosol"/>
    <property type="evidence" value="ECO:0007669"/>
    <property type="project" value="TreeGrafter"/>
</dbReference>
<dbReference type="GO" id="GO:0052906">
    <property type="term" value="F:tRNA (guanine(37)-N1)-methyltransferase activity"/>
    <property type="evidence" value="ECO:0007669"/>
    <property type="project" value="UniProtKB-UniRule"/>
</dbReference>
<dbReference type="GO" id="GO:0002939">
    <property type="term" value="P:tRNA N1-guanine methylation"/>
    <property type="evidence" value="ECO:0007669"/>
    <property type="project" value="TreeGrafter"/>
</dbReference>
<dbReference type="CDD" id="cd18080">
    <property type="entry name" value="TrmD-like"/>
    <property type="match status" value="1"/>
</dbReference>
<dbReference type="FunFam" id="3.40.1280.10:FF:000001">
    <property type="entry name" value="tRNA (guanine-N(1)-)-methyltransferase"/>
    <property type="match status" value="1"/>
</dbReference>
<dbReference type="Gene3D" id="3.40.1280.10">
    <property type="match status" value="1"/>
</dbReference>
<dbReference type="Gene3D" id="1.10.1270.20">
    <property type="entry name" value="tRNA(m1g37)methyltransferase, domain 2"/>
    <property type="match status" value="1"/>
</dbReference>
<dbReference type="HAMAP" id="MF_00605">
    <property type="entry name" value="TrmD"/>
    <property type="match status" value="1"/>
</dbReference>
<dbReference type="InterPro" id="IPR029028">
    <property type="entry name" value="Alpha/beta_knot_MTases"/>
</dbReference>
<dbReference type="InterPro" id="IPR023148">
    <property type="entry name" value="tRNA_m1G_MeTrfase_C_sf"/>
</dbReference>
<dbReference type="InterPro" id="IPR002649">
    <property type="entry name" value="tRNA_m1G_MeTrfase_TrmD"/>
</dbReference>
<dbReference type="InterPro" id="IPR029026">
    <property type="entry name" value="tRNA_m1G_MTases_N"/>
</dbReference>
<dbReference type="InterPro" id="IPR016009">
    <property type="entry name" value="tRNA_MeTrfase_TRMD/TRM10"/>
</dbReference>
<dbReference type="NCBIfam" id="NF000648">
    <property type="entry name" value="PRK00026.1"/>
    <property type="match status" value="1"/>
</dbReference>
<dbReference type="NCBIfam" id="TIGR00088">
    <property type="entry name" value="trmD"/>
    <property type="match status" value="1"/>
</dbReference>
<dbReference type="PANTHER" id="PTHR46417">
    <property type="entry name" value="TRNA (GUANINE-N(1)-)-METHYLTRANSFERASE"/>
    <property type="match status" value="1"/>
</dbReference>
<dbReference type="PANTHER" id="PTHR46417:SF1">
    <property type="entry name" value="TRNA (GUANINE-N(1)-)-METHYLTRANSFERASE"/>
    <property type="match status" value="1"/>
</dbReference>
<dbReference type="Pfam" id="PF01746">
    <property type="entry name" value="tRNA_m1G_MT"/>
    <property type="match status" value="1"/>
</dbReference>
<dbReference type="PIRSF" id="PIRSF000386">
    <property type="entry name" value="tRNA_mtase"/>
    <property type="match status" value="1"/>
</dbReference>
<dbReference type="SUPFAM" id="SSF75217">
    <property type="entry name" value="alpha/beta knot"/>
    <property type="match status" value="1"/>
</dbReference>
<protein>
    <recommendedName>
        <fullName evidence="1">tRNA (guanine-N(1)-)-methyltransferase</fullName>
        <ecNumber evidence="1">2.1.1.228</ecNumber>
    </recommendedName>
    <alternativeName>
        <fullName evidence="1">M1G-methyltransferase</fullName>
    </alternativeName>
    <alternativeName>
        <fullName evidence="1">tRNA [GM37] methyltransferase</fullName>
    </alternativeName>
</protein>
<gene>
    <name evidence="1" type="primary">trmD</name>
    <name type="ordered locus">Rru_A1187</name>
</gene>
<organism>
    <name type="scientific">Rhodospirillum rubrum (strain ATCC 11170 / ATH 1.1.1 / DSM 467 / LMG 4362 / NCIMB 8255 / S1)</name>
    <dbReference type="NCBI Taxonomy" id="269796"/>
    <lineage>
        <taxon>Bacteria</taxon>
        <taxon>Pseudomonadati</taxon>
        <taxon>Pseudomonadota</taxon>
        <taxon>Alphaproteobacteria</taxon>
        <taxon>Rhodospirillales</taxon>
        <taxon>Rhodospirillaceae</taxon>
        <taxon>Rhodospirillum</taxon>
    </lineage>
</organism>
<evidence type="ECO:0000255" key="1">
    <source>
        <dbReference type="HAMAP-Rule" id="MF_00605"/>
    </source>
</evidence>
<feature type="chain" id="PRO_0000257462" description="tRNA (guanine-N(1)-)-methyltransferase">
    <location>
        <begin position="1"/>
        <end position="239"/>
    </location>
</feature>
<feature type="binding site" evidence="1">
    <location>
        <position position="112"/>
    </location>
    <ligand>
        <name>S-adenosyl-L-methionine</name>
        <dbReference type="ChEBI" id="CHEBI:59789"/>
    </ligand>
</feature>
<feature type="binding site" evidence="1">
    <location>
        <begin position="132"/>
        <end position="137"/>
    </location>
    <ligand>
        <name>S-adenosyl-L-methionine</name>
        <dbReference type="ChEBI" id="CHEBI:59789"/>
    </ligand>
</feature>
<name>TRMD_RHORT</name>
<proteinExistence type="inferred from homology"/>
<accession>Q2RV57</accession>
<keyword id="KW-0963">Cytoplasm</keyword>
<keyword id="KW-0489">Methyltransferase</keyword>
<keyword id="KW-1185">Reference proteome</keyword>
<keyword id="KW-0949">S-adenosyl-L-methionine</keyword>
<keyword id="KW-0808">Transferase</keyword>
<keyword id="KW-0819">tRNA processing</keyword>